<gene>
    <name evidence="12" type="primary">CFAP45</name>
    <name evidence="12" type="synonym">CCDC19</name>
    <name evidence="11" type="synonym">NESG1</name>
</gene>
<feature type="chain" id="PRO_0000089410" description="Cilia- and flagella-associated protein 45">
    <location>
        <begin position="1"/>
        <end position="551"/>
    </location>
</feature>
<feature type="region of interest" description="Disordered" evidence="4">
    <location>
        <begin position="1"/>
        <end position="30"/>
    </location>
</feature>
<feature type="region of interest" description="Disordered" evidence="4">
    <location>
        <begin position="461"/>
        <end position="489"/>
    </location>
</feature>
<feature type="coiled-coil region" evidence="3">
    <location>
        <begin position="157"/>
        <end position="526"/>
    </location>
</feature>
<feature type="splice variant" id="VSP_056614" description="In isoform 2." evidence="9">
    <location>
        <begin position="1"/>
        <end position="85"/>
    </location>
</feature>
<feature type="sequence variant" id="VAR_085330" description="In HTX11; loss of panaxonemal expression in respiratory cilia and in sperm flagella." evidence="7">
    <location>
        <begin position="241"/>
        <end position="551"/>
    </location>
</feature>
<feature type="sequence variant" id="VAR_059600" description="In dbSNP:rs16842789.">
    <original>E</original>
    <variation>G</variation>
    <location>
        <position position="291"/>
    </location>
</feature>
<feature type="sequence variant" id="VAR_085331" description="In HTX11; loss of panaxonemal expression in respiratory cilia and in sperm flagella; dbSNP:rs201144590." evidence="7">
    <location>
        <begin position="303"/>
        <end position="551"/>
    </location>
</feature>
<comment type="function">
    <text evidence="1 7 8">Microtubule inner protein (MIP) part of the dynein-decorated doublet microtubules (DMTs) in cilia axoneme, which is required for motile cilia beating (PubMed:36191189). It is an AMP-binding protein that may facilitate dynein ATPase-dependent ciliary and flagellar beating via adenine nucleotide homeostasis. May function as a donor of AMP to AK8 and hence promote ADP production (PubMed:33139725).</text>
</comment>
<comment type="subunit">
    <text evidence="2 7">Microtubule inner protein component of sperm flagellar doublet microtubules (By similarity). Interacts with AK8; dimerization with AK8 may create a cavity at the interface of the dimer that can accommodate AMP (PubMed:33139725). Interacts with CFAP52 (PubMed:33139725). Interacts with ENKUR (PubMed:33139725). Directly interacts with DNALI1 (PubMed:33139725). Interacts with DNAH11 (PubMed:33139725). Interacts with DNAI1 (PubMed:33139725).</text>
</comment>
<comment type="interaction">
    <interactant intactId="EBI-13039584">
        <id>Q9UL16</id>
    </interactant>
    <interactant intactId="EBI-9246952">
        <id>Q8TC29</id>
        <label>ENKUR</label>
    </interactant>
    <organismsDiffer>false</organismsDiffer>
    <experiments>3</experiments>
</comment>
<comment type="subcellular location">
    <subcellularLocation>
        <location evidence="7 8">Cytoplasm</location>
        <location evidence="7 8">Cytoskeleton</location>
        <location evidence="7 8">Cilium axoneme</location>
    </subcellularLocation>
    <subcellularLocation>
        <location evidence="7">Cytoplasm</location>
        <location evidence="7">Cytoskeleton</location>
        <location evidence="7">Flagellum axoneme</location>
    </subcellularLocation>
    <subcellularLocation>
        <location evidence="6">Cell projection</location>
        <location evidence="6">Cilium</location>
    </subcellularLocation>
    <subcellularLocation>
        <location evidence="6">Cell projection</location>
        <location evidence="6">Cilium</location>
        <location evidence="6">Flagellum</location>
    </subcellularLocation>
    <text evidence="7">Located in the proximal region of respiratory cilia.</text>
</comment>
<comment type="alternative products">
    <event type="alternative splicing"/>
    <isoform>
        <id>Q9UL16-1</id>
        <name>1</name>
        <sequence type="displayed"/>
    </isoform>
    <isoform>
        <id>Q9UL16-2</id>
        <name>2</name>
        <sequence type="described" ref="VSP_056614"/>
    </isoform>
</comment>
<comment type="tissue specificity">
    <text evidence="5 7">Expressed in respiratory cells and in sperm (at protein level) (PubMed:33139725). Expressed in nasopharyngeal epithelium and trachea (PubMed:10524255).</text>
</comment>
<comment type="disease" evidence="7">
    <disease id="DI-06267">
        <name>Heterotaxy, visceral, 11, autosomal, with male infertility</name>
        <acronym>HTX11</acronym>
        <description>A form of visceral heterotaxy, a complex disorder due to disruption of the normal left-right asymmetry of the thoracoabdominal organs. Visceral heterotaxy or situs ambiguus results in randomization of the placement of visceral organs, including the heart, lungs, liver, spleen, and stomach. The organs are oriented randomly with respect to the left-right axis and with respect to one another. It can be associated with a variety of congenital defects including cardiac malformations. HTX11 is an autosomal recessive form associated with male infertility due to reduced flagellar motility.</description>
        <dbReference type="MIM" id="619608"/>
    </disease>
    <text>The disease is caused by variants affecting the gene represented in this entry.</text>
</comment>
<comment type="similarity">
    <text evidence="10">Belongs to the CFAP45 family.</text>
</comment>
<comment type="sequence caution" evidence="10">
    <conflict type="erroneous initiation">
        <sequence resource="EMBL-CDS" id="AAD55817"/>
    </conflict>
    <text>Truncated N-terminus.</text>
</comment>
<comment type="sequence caution" evidence="10">
    <conflict type="frameshift">
        <sequence resource="EMBL-CDS" id="AAD55817"/>
    </conflict>
</comment>
<reference key="1">
    <citation type="journal article" date="1999" name="Gene">
        <title>Molecular cloning of a novel tissue-specific gene from human nasopharyngeal epithelium.</title>
        <authorList>
            <person name="Li Z."/>
            <person name="Yao K."/>
            <person name="Cao Y."/>
        </authorList>
    </citation>
    <scope>NUCLEOTIDE SEQUENCE [MRNA] (ISOFORM 1)</scope>
    <scope>TISSUE SPECIFICITY</scope>
    <source>
        <tissue>Nasopharyngeal epithelium</tissue>
    </source>
</reference>
<reference key="2">
    <citation type="journal article" date="2006" name="Nature">
        <title>The DNA sequence and biological annotation of human chromosome 1.</title>
        <authorList>
            <person name="Gregory S.G."/>
            <person name="Barlow K.F."/>
            <person name="McLay K.E."/>
            <person name="Kaul R."/>
            <person name="Swarbreck D."/>
            <person name="Dunham A."/>
            <person name="Scott C.E."/>
            <person name="Howe K.L."/>
            <person name="Woodfine K."/>
            <person name="Spencer C.C.A."/>
            <person name="Jones M.C."/>
            <person name="Gillson C."/>
            <person name="Searle S."/>
            <person name="Zhou Y."/>
            <person name="Kokocinski F."/>
            <person name="McDonald L."/>
            <person name="Evans R."/>
            <person name="Phillips K."/>
            <person name="Atkinson A."/>
            <person name="Cooper R."/>
            <person name="Jones C."/>
            <person name="Hall R.E."/>
            <person name="Andrews T.D."/>
            <person name="Lloyd C."/>
            <person name="Ainscough R."/>
            <person name="Almeida J.P."/>
            <person name="Ambrose K.D."/>
            <person name="Anderson F."/>
            <person name="Andrew R.W."/>
            <person name="Ashwell R.I.S."/>
            <person name="Aubin K."/>
            <person name="Babbage A.K."/>
            <person name="Bagguley C.L."/>
            <person name="Bailey J."/>
            <person name="Beasley H."/>
            <person name="Bethel G."/>
            <person name="Bird C.P."/>
            <person name="Bray-Allen S."/>
            <person name="Brown J.Y."/>
            <person name="Brown A.J."/>
            <person name="Buckley D."/>
            <person name="Burton J."/>
            <person name="Bye J."/>
            <person name="Carder C."/>
            <person name="Chapman J.C."/>
            <person name="Clark S.Y."/>
            <person name="Clarke G."/>
            <person name="Clee C."/>
            <person name="Cobley V."/>
            <person name="Collier R.E."/>
            <person name="Corby N."/>
            <person name="Coville G.J."/>
            <person name="Davies J."/>
            <person name="Deadman R."/>
            <person name="Dunn M."/>
            <person name="Earthrowl M."/>
            <person name="Ellington A.G."/>
            <person name="Errington H."/>
            <person name="Frankish A."/>
            <person name="Frankland J."/>
            <person name="French L."/>
            <person name="Garner P."/>
            <person name="Garnett J."/>
            <person name="Gay L."/>
            <person name="Ghori M.R.J."/>
            <person name="Gibson R."/>
            <person name="Gilby L.M."/>
            <person name="Gillett W."/>
            <person name="Glithero R.J."/>
            <person name="Grafham D.V."/>
            <person name="Griffiths C."/>
            <person name="Griffiths-Jones S."/>
            <person name="Grocock R."/>
            <person name="Hammond S."/>
            <person name="Harrison E.S.I."/>
            <person name="Hart E."/>
            <person name="Haugen E."/>
            <person name="Heath P.D."/>
            <person name="Holmes S."/>
            <person name="Holt K."/>
            <person name="Howden P.J."/>
            <person name="Hunt A.R."/>
            <person name="Hunt S.E."/>
            <person name="Hunter G."/>
            <person name="Isherwood J."/>
            <person name="James R."/>
            <person name="Johnson C."/>
            <person name="Johnson D."/>
            <person name="Joy A."/>
            <person name="Kay M."/>
            <person name="Kershaw J.K."/>
            <person name="Kibukawa M."/>
            <person name="Kimberley A.M."/>
            <person name="King A."/>
            <person name="Knights A.J."/>
            <person name="Lad H."/>
            <person name="Laird G."/>
            <person name="Lawlor S."/>
            <person name="Leongamornlert D.A."/>
            <person name="Lloyd D.M."/>
            <person name="Loveland J."/>
            <person name="Lovell J."/>
            <person name="Lush M.J."/>
            <person name="Lyne R."/>
            <person name="Martin S."/>
            <person name="Mashreghi-Mohammadi M."/>
            <person name="Matthews L."/>
            <person name="Matthews N.S.W."/>
            <person name="McLaren S."/>
            <person name="Milne S."/>
            <person name="Mistry S."/>
            <person name="Moore M.J.F."/>
            <person name="Nickerson T."/>
            <person name="O'Dell C.N."/>
            <person name="Oliver K."/>
            <person name="Palmeiri A."/>
            <person name="Palmer S.A."/>
            <person name="Parker A."/>
            <person name="Patel D."/>
            <person name="Pearce A.V."/>
            <person name="Peck A.I."/>
            <person name="Pelan S."/>
            <person name="Phelps K."/>
            <person name="Phillimore B.J."/>
            <person name="Plumb R."/>
            <person name="Rajan J."/>
            <person name="Raymond C."/>
            <person name="Rouse G."/>
            <person name="Saenphimmachak C."/>
            <person name="Sehra H.K."/>
            <person name="Sheridan E."/>
            <person name="Shownkeen R."/>
            <person name="Sims S."/>
            <person name="Skuce C.D."/>
            <person name="Smith M."/>
            <person name="Steward C."/>
            <person name="Subramanian S."/>
            <person name="Sycamore N."/>
            <person name="Tracey A."/>
            <person name="Tromans A."/>
            <person name="Van Helmond Z."/>
            <person name="Wall M."/>
            <person name="Wallis J.M."/>
            <person name="White S."/>
            <person name="Whitehead S.L."/>
            <person name="Wilkinson J.E."/>
            <person name="Willey D.L."/>
            <person name="Williams H."/>
            <person name="Wilming L."/>
            <person name="Wray P.W."/>
            <person name="Wu Z."/>
            <person name="Coulson A."/>
            <person name="Vaudin M."/>
            <person name="Sulston J.E."/>
            <person name="Durbin R.M."/>
            <person name="Hubbard T."/>
            <person name="Wooster R."/>
            <person name="Dunham I."/>
            <person name="Carter N.P."/>
            <person name="McVean G."/>
            <person name="Ross M.T."/>
            <person name="Harrow J."/>
            <person name="Olson M.V."/>
            <person name="Beck S."/>
            <person name="Rogers J."/>
            <person name="Bentley D.R."/>
        </authorList>
    </citation>
    <scope>NUCLEOTIDE SEQUENCE [LARGE SCALE GENOMIC DNA]</scope>
</reference>
<reference key="3">
    <citation type="submission" date="2005-09" db="EMBL/GenBank/DDBJ databases">
        <authorList>
            <person name="Mural R.J."/>
            <person name="Istrail S."/>
            <person name="Sutton G.G."/>
            <person name="Florea L."/>
            <person name="Halpern A.L."/>
            <person name="Mobarry C.M."/>
            <person name="Lippert R."/>
            <person name="Walenz B."/>
            <person name="Shatkay H."/>
            <person name="Dew I."/>
            <person name="Miller J.R."/>
            <person name="Flanigan M.J."/>
            <person name="Edwards N.J."/>
            <person name="Bolanos R."/>
            <person name="Fasulo D."/>
            <person name="Halldorsson B.V."/>
            <person name="Hannenhalli S."/>
            <person name="Turner R."/>
            <person name="Yooseph S."/>
            <person name="Lu F."/>
            <person name="Nusskern D.R."/>
            <person name="Shue B.C."/>
            <person name="Zheng X.H."/>
            <person name="Zhong F."/>
            <person name="Delcher A.L."/>
            <person name="Huson D.H."/>
            <person name="Kravitz S.A."/>
            <person name="Mouchard L."/>
            <person name="Reinert K."/>
            <person name="Remington K.A."/>
            <person name="Clark A.G."/>
            <person name="Waterman M.S."/>
            <person name="Eichler E.E."/>
            <person name="Adams M.D."/>
            <person name="Hunkapiller M.W."/>
            <person name="Myers E.W."/>
            <person name="Venter J.C."/>
        </authorList>
    </citation>
    <scope>NUCLEOTIDE SEQUENCE [LARGE SCALE GENOMIC DNA]</scope>
</reference>
<reference key="4">
    <citation type="journal article" date="2004" name="Genome Res.">
        <title>The status, quality, and expansion of the NIH full-length cDNA project: the Mammalian Gene Collection (MGC).</title>
        <authorList>
            <consortium name="The MGC Project Team"/>
        </authorList>
    </citation>
    <scope>NUCLEOTIDE SEQUENCE [LARGE SCALE MRNA] (ISOFORM 2)</scope>
    <source>
        <tissue>Testis</tissue>
    </source>
</reference>
<reference key="5">
    <citation type="journal article" date="2019" name="J. Proteome Res.">
        <title>Cell Type-Specific Expression of Testis Elevated Genes Based on Transcriptomics and Antibody-Based Proteomics.</title>
        <authorList>
            <person name="Pineau C."/>
            <person name="Hikmet F."/>
            <person name="Zhang C."/>
            <person name="Oksvold P."/>
            <person name="Chen S."/>
            <person name="Fagerberg L."/>
            <person name="Uhlen M."/>
            <person name="Lindskog C."/>
        </authorList>
    </citation>
    <scope>SUBCELLULAR LOCATION</scope>
</reference>
<reference evidence="13" key="6">
    <citation type="journal article" date="2022" name="Proc. Natl. Acad. Sci. U.S.A.">
        <title>SPACA9 is a lumenal protein of human ciliary singlet and doublet microtubules.</title>
        <authorList>
            <person name="Gui M."/>
            <person name="Croft J.T."/>
            <person name="Zabeo D."/>
            <person name="Acharya V."/>
            <person name="Kollman J.M."/>
            <person name="Burgoyne T."/>
            <person name="Hoog J.L."/>
            <person name="Brown A."/>
        </authorList>
    </citation>
    <scope>STRUCTURE BY ELECTRON MICROSCOPY (3.60 ANGSTROMS)</scope>
    <scope>FUNCTION</scope>
    <scope>SUBCELLULAR LOCATION</scope>
    <scope>TISSUE SPECIFICITY</scope>
</reference>
<reference key="7">
    <citation type="journal article" date="2020" name="Nat. Commun.">
        <title>CFAP45 deficiency causes situs abnormalities and asthenospermia by disrupting an axonemal adenine nucleotide homeostasis module.</title>
        <authorList>
            <person name="Dougherty G.W."/>
            <person name="Mizuno K."/>
            <person name="Noethe-Menchen T."/>
            <person name="Ikawa Y."/>
            <person name="Boldt K."/>
            <person name="Ta-Shma A."/>
            <person name="Aprea I."/>
            <person name="Minegishi K."/>
            <person name="Pang Y.P."/>
            <person name="Pennekamp P."/>
            <person name="Loges N.T."/>
            <person name="Raidt J."/>
            <person name="Hjeij R."/>
            <person name="Wallmeier J."/>
            <person name="Mussaffi H."/>
            <person name="Perles Z."/>
            <person name="Elpeleg O."/>
            <person name="Rabert F."/>
            <person name="Shiratori H."/>
            <person name="Letteboer S.J."/>
            <person name="Horn N."/>
            <person name="Young S."/>
            <person name="Struenker T."/>
            <person name="Stumme F."/>
            <person name="Werner C."/>
            <person name="Olbrich H."/>
            <person name="Takaoka K."/>
            <person name="Ide T."/>
            <person name="Twan W.K."/>
            <person name="Biebach L."/>
            <person name="Grosse-Onnebrink J."/>
            <person name="Klinkenbusch J.A."/>
            <person name="Praveen K."/>
            <person name="Bracht D.C."/>
            <person name="Hoeben I.M."/>
            <person name="Junger K."/>
            <person name="Guetzlaff J."/>
            <person name="Cindric S."/>
            <person name="Aviram M."/>
            <person name="Kaiser T."/>
            <person name="Memari Y."/>
            <person name="Dzeja P.P."/>
            <person name="Dworniczak B."/>
            <person name="Ueffing M."/>
            <person name="Roepman R."/>
            <person name="Bartscherer K."/>
            <person name="Katsanis N."/>
            <person name="Davis E.E."/>
            <person name="Amirav I."/>
            <person name="Hamada H."/>
            <person name="Omran H."/>
        </authorList>
    </citation>
    <scope>FUNCTION</scope>
    <scope>AMP-BINDING</scope>
    <scope>INTERACTION WITH AK8; CFAP52; DNAH11; DNAI1; DNALI1 AND ENKUR</scope>
    <scope>SUBCELLULAR LOCATION</scope>
    <scope>TISSUE SPECIFICITY</scope>
    <scope>INVOLVEMENT IN HTX11</scope>
    <scope>VARIANTS HTX11 241-GLN--ASN-551 DEL AND 303-ARG--ASN-551 DEL</scope>
</reference>
<keyword id="KW-0002">3D-structure</keyword>
<keyword id="KW-0025">Alternative splicing</keyword>
<keyword id="KW-0966">Cell projection</keyword>
<keyword id="KW-1186">Ciliopathy</keyword>
<keyword id="KW-0969">Cilium</keyword>
<keyword id="KW-0175">Coiled coil</keyword>
<keyword id="KW-0963">Cytoplasm</keyword>
<keyword id="KW-0206">Cytoskeleton</keyword>
<keyword id="KW-0225">Disease variant</keyword>
<keyword id="KW-0282">Flagellum</keyword>
<keyword id="KW-1056">Heterotaxy</keyword>
<keyword id="KW-1267">Proteomics identification</keyword>
<keyword id="KW-1185">Reference proteome</keyword>
<accession>Q9UL16</accession>
<accession>C9JH28</accession>
<accession>Q05BA3</accession>
<accession>Q5VU18</accession>
<dbReference type="EMBL" id="AF094758">
    <property type="protein sequence ID" value="AAD55817.1"/>
    <property type="status" value="ALT_SEQ"/>
    <property type="molecule type" value="mRNA"/>
</dbReference>
<dbReference type="EMBL" id="AL590560">
    <property type="status" value="NOT_ANNOTATED_CDS"/>
    <property type="molecule type" value="Genomic_DNA"/>
</dbReference>
<dbReference type="EMBL" id="CH471121">
    <property type="protein sequence ID" value="EAW52766.1"/>
    <property type="molecule type" value="Genomic_DNA"/>
</dbReference>
<dbReference type="EMBL" id="BC089391">
    <property type="protein sequence ID" value="AAH89391.1"/>
    <property type="molecule type" value="mRNA"/>
</dbReference>
<dbReference type="CCDS" id="CCDS30914.1">
    <molecule id="Q9UL16-1"/>
</dbReference>
<dbReference type="RefSeq" id="NP_036469.2">
    <molecule id="Q9UL16-1"/>
    <property type="nucleotide sequence ID" value="NM_012337.3"/>
</dbReference>
<dbReference type="PDB" id="7UNG">
    <property type="method" value="EM"/>
    <property type="resolution" value="3.60 A"/>
    <property type="chains" value="a/b/c/d=1-551"/>
</dbReference>
<dbReference type="PDB" id="8J07">
    <property type="method" value="EM"/>
    <property type="resolution" value="4.10 A"/>
    <property type="chains" value="1D/1E/1F/1G/1H/1I/1J=1-551"/>
</dbReference>
<dbReference type="PDBsum" id="7UNG"/>
<dbReference type="PDBsum" id="8J07"/>
<dbReference type="EMDB" id="EMD-26624"/>
<dbReference type="EMDB" id="EMD-35888"/>
<dbReference type="SMR" id="Q9UL16"/>
<dbReference type="BioGRID" id="117323">
    <property type="interactions" value="19"/>
</dbReference>
<dbReference type="FunCoup" id="Q9UL16">
    <property type="interactions" value="77"/>
</dbReference>
<dbReference type="IntAct" id="Q9UL16">
    <property type="interactions" value="4"/>
</dbReference>
<dbReference type="STRING" id="9606.ENSP00000357079"/>
<dbReference type="GlyGen" id="Q9UL16">
    <property type="glycosylation" value="1 site, 1 O-linked glycan (1 site)"/>
</dbReference>
<dbReference type="iPTMnet" id="Q9UL16"/>
<dbReference type="PhosphoSitePlus" id="Q9UL16"/>
<dbReference type="BioMuta" id="CFAP45"/>
<dbReference type="DMDM" id="254763259"/>
<dbReference type="jPOST" id="Q9UL16"/>
<dbReference type="MassIVE" id="Q9UL16"/>
<dbReference type="PaxDb" id="9606-ENSP00000357079"/>
<dbReference type="PeptideAtlas" id="Q9UL16"/>
<dbReference type="ProteomicsDB" id="58365"/>
<dbReference type="ProteomicsDB" id="84929">
    <molecule id="Q9UL16-1"/>
</dbReference>
<dbReference type="Antibodypedia" id="34262">
    <property type="antibodies" value="147 antibodies from 22 providers"/>
</dbReference>
<dbReference type="DNASU" id="25790"/>
<dbReference type="Ensembl" id="ENST00000368099.9">
    <molecule id="Q9UL16-1"/>
    <property type="protein sequence ID" value="ENSP00000357079.4"/>
    <property type="gene ID" value="ENSG00000213085.10"/>
</dbReference>
<dbReference type="Ensembl" id="ENST00000426543.6">
    <molecule id="Q9UL16-2"/>
    <property type="protein sequence ID" value="ENSP00000403044.2"/>
    <property type="gene ID" value="ENSG00000213085.10"/>
</dbReference>
<dbReference type="GeneID" id="25790"/>
<dbReference type="KEGG" id="hsa:25790"/>
<dbReference type="MANE-Select" id="ENST00000368099.9">
    <property type="protein sequence ID" value="ENSP00000357079.4"/>
    <property type="RefSeq nucleotide sequence ID" value="NM_012337.3"/>
    <property type="RefSeq protein sequence ID" value="NP_036469.2"/>
</dbReference>
<dbReference type="UCSC" id="uc001fui.4">
    <molecule id="Q9UL16-1"/>
    <property type="organism name" value="human"/>
</dbReference>
<dbReference type="AGR" id="HGNC:17229"/>
<dbReference type="CTD" id="25790"/>
<dbReference type="DisGeNET" id="25790"/>
<dbReference type="GeneCards" id="CFAP45"/>
<dbReference type="HGNC" id="HGNC:17229">
    <property type="gene designation" value="CFAP45"/>
</dbReference>
<dbReference type="HPA" id="ENSG00000213085">
    <property type="expression patterns" value="Group enriched (choroid plexus, fallopian tube, testis)"/>
</dbReference>
<dbReference type="MalaCards" id="CFAP45"/>
<dbReference type="MIM" id="605152">
    <property type="type" value="gene"/>
</dbReference>
<dbReference type="MIM" id="619608">
    <property type="type" value="phenotype"/>
</dbReference>
<dbReference type="neXtProt" id="NX_Q9UL16"/>
<dbReference type="OpenTargets" id="ENSG00000213085"/>
<dbReference type="PharmGKB" id="PA142672179"/>
<dbReference type="VEuPathDB" id="HostDB:ENSG00000213085"/>
<dbReference type="eggNOG" id="ENOG502QPRZ">
    <property type="taxonomic scope" value="Eukaryota"/>
</dbReference>
<dbReference type="GeneTree" id="ENSGT00730000111174"/>
<dbReference type="HOGENOM" id="CLU_026959_1_1_1"/>
<dbReference type="InParanoid" id="Q9UL16"/>
<dbReference type="OMA" id="WGHKPET"/>
<dbReference type="OrthoDB" id="1902038at2759"/>
<dbReference type="PAN-GO" id="Q9UL16">
    <property type="GO annotations" value="0 GO annotations based on evolutionary models"/>
</dbReference>
<dbReference type="PhylomeDB" id="Q9UL16"/>
<dbReference type="TreeFam" id="TF327685"/>
<dbReference type="PathwayCommons" id="Q9UL16"/>
<dbReference type="SignaLink" id="Q9UL16"/>
<dbReference type="BioGRID-ORCS" id="25790">
    <property type="hits" value="11 hits in 1143 CRISPR screens"/>
</dbReference>
<dbReference type="ChiTaRS" id="CFAP45">
    <property type="organism name" value="human"/>
</dbReference>
<dbReference type="GenomeRNAi" id="25790"/>
<dbReference type="Pharos" id="Q9UL16">
    <property type="development level" value="Tbio"/>
</dbReference>
<dbReference type="PRO" id="PR:Q9UL16"/>
<dbReference type="Proteomes" id="UP000005640">
    <property type="component" value="Chromosome 1"/>
</dbReference>
<dbReference type="RNAct" id="Q9UL16">
    <property type="molecule type" value="protein"/>
</dbReference>
<dbReference type="Bgee" id="ENSG00000213085">
    <property type="expression patterns" value="Expressed in right uterine tube and 122 other cell types or tissues"/>
</dbReference>
<dbReference type="ExpressionAtlas" id="Q9UL16">
    <property type="expression patterns" value="baseline and differential"/>
</dbReference>
<dbReference type="GO" id="GO:0097728">
    <property type="term" value="C:9+0 motile cilium"/>
    <property type="evidence" value="ECO:0007669"/>
    <property type="project" value="Ensembl"/>
</dbReference>
<dbReference type="GO" id="GO:0097729">
    <property type="term" value="C:9+2 motile cilium"/>
    <property type="evidence" value="ECO:0000314"/>
    <property type="project" value="GO_Central"/>
</dbReference>
<dbReference type="GO" id="GO:0160112">
    <property type="term" value="C:axonemal B tubule inner sheath"/>
    <property type="evidence" value="ECO:0000250"/>
    <property type="project" value="UniProtKB"/>
</dbReference>
<dbReference type="GO" id="GO:0005879">
    <property type="term" value="C:axonemal microtubule"/>
    <property type="evidence" value="ECO:0000314"/>
    <property type="project" value="UniProtKB"/>
</dbReference>
<dbReference type="GO" id="GO:0005930">
    <property type="term" value="C:axoneme"/>
    <property type="evidence" value="ECO:0000314"/>
    <property type="project" value="GO_Central"/>
</dbReference>
<dbReference type="GO" id="GO:0005929">
    <property type="term" value="C:cilium"/>
    <property type="evidence" value="ECO:0000314"/>
    <property type="project" value="UniProtKB"/>
</dbReference>
<dbReference type="GO" id="GO:0005576">
    <property type="term" value="C:extracellular region"/>
    <property type="evidence" value="ECO:0007669"/>
    <property type="project" value="GOC"/>
</dbReference>
<dbReference type="GO" id="GO:0005634">
    <property type="term" value="C:nucleus"/>
    <property type="evidence" value="ECO:0000303"/>
    <property type="project" value="UniProtKB"/>
</dbReference>
<dbReference type="GO" id="GO:0036126">
    <property type="term" value="C:sperm flagellum"/>
    <property type="evidence" value="ECO:0000314"/>
    <property type="project" value="UniProtKB"/>
</dbReference>
<dbReference type="GO" id="GO:0016208">
    <property type="term" value="F:AMP binding"/>
    <property type="evidence" value="ECO:0000314"/>
    <property type="project" value="GO_Central"/>
</dbReference>
<dbReference type="GO" id="GO:0090660">
    <property type="term" value="P:cerebrospinal fluid circulation"/>
    <property type="evidence" value="ECO:0007669"/>
    <property type="project" value="Ensembl"/>
</dbReference>
<dbReference type="GO" id="GO:0060287">
    <property type="term" value="P:epithelial cilium movement involved in determination of left/right asymmetry"/>
    <property type="evidence" value="ECO:0007669"/>
    <property type="project" value="Ensembl"/>
</dbReference>
<dbReference type="GO" id="GO:0061966">
    <property type="term" value="P:establishment of left/right asymmetry"/>
    <property type="evidence" value="ECO:0000315"/>
    <property type="project" value="GO_Central"/>
</dbReference>
<dbReference type="GO" id="GO:0030317">
    <property type="term" value="P:flagellated sperm motility"/>
    <property type="evidence" value="ECO:0000315"/>
    <property type="project" value="GO_Central"/>
</dbReference>
<dbReference type="GO" id="GO:0060296">
    <property type="term" value="P:regulation of cilium beat frequency involved in ciliary motility"/>
    <property type="evidence" value="ECO:0007669"/>
    <property type="project" value="Ensembl"/>
</dbReference>
<dbReference type="InterPro" id="IPR033253">
    <property type="entry name" value="CFAP45"/>
</dbReference>
<dbReference type="InterPro" id="IPR043597">
    <property type="entry name" value="TPH_dom"/>
</dbReference>
<dbReference type="PANTHER" id="PTHR15504:SF0">
    <property type="entry name" value="CILIA- AND FLAGELLA-ASSOCIATED PROTEIN 45"/>
    <property type="match status" value="1"/>
</dbReference>
<dbReference type="PANTHER" id="PTHR15504">
    <property type="entry name" value="NASOPHARYNGEAL EPITHELIUM SPECIFIC PROTEIN 1"/>
    <property type="match status" value="1"/>
</dbReference>
<dbReference type="Pfam" id="PF13868">
    <property type="entry name" value="TPH"/>
    <property type="match status" value="1"/>
</dbReference>
<organism>
    <name type="scientific">Homo sapiens</name>
    <name type="common">Human</name>
    <dbReference type="NCBI Taxonomy" id="9606"/>
    <lineage>
        <taxon>Eukaryota</taxon>
        <taxon>Metazoa</taxon>
        <taxon>Chordata</taxon>
        <taxon>Craniata</taxon>
        <taxon>Vertebrata</taxon>
        <taxon>Euteleostomi</taxon>
        <taxon>Mammalia</taxon>
        <taxon>Eutheria</taxon>
        <taxon>Euarchontoglires</taxon>
        <taxon>Primates</taxon>
        <taxon>Haplorrhini</taxon>
        <taxon>Catarrhini</taxon>
        <taxon>Hominidae</taxon>
        <taxon>Homo</taxon>
    </lineage>
</organism>
<proteinExistence type="evidence at protein level"/>
<protein>
    <recommendedName>
        <fullName evidence="12">Cilia- and flagella-associated protein 45</fullName>
    </recommendedName>
    <alternativeName>
        <fullName evidence="12">Coiled-coil domain-containing protein 19</fullName>
    </alternativeName>
    <alternativeName>
        <fullName evidence="11">Nasopharyngeal epithelium-specific protein 1</fullName>
    </alternativeName>
</protein>
<evidence type="ECO:0000250" key="1">
    <source>
        <dbReference type="UniProtKB" id="Q32LN4"/>
    </source>
</evidence>
<evidence type="ECO:0000250" key="2">
    <source>
        <dbReference type="UniProtKB" id="Q9D9U9"/>
    </source>
</evidence>
<evidence type="ECO:0000255" key="3"/>
<evidence type="ECO:0000256" key="4">
    <source>
        <dbReference type="SAM" id="MobiDB-lite"/>
    </source>
</evidence>
<evidence type="ECO:0000269" key="5">
    <source>
    </source>
</evidence>
<evidence type="ECO:0000269" key="6">
    <source>
    </source>
</evidence>
<evidence type="ECO:0000269" key="7">
    <source>
    </source>
</evidence>
<evidence type="ECO:0000269" key="8">
    <source>
    </source>
</evidence>
<evidence type="ECO:0000303" key="9">
    <source>
    </source>
</evidence>
<evidence type="ECO:0000305" key="10"/>
<evidence type="ECO:0000312" key="11">
    <source>
        <dbReference type="EMBL" id="AAD55817.1"/>
    </source>
</evidence>
<evidence type="ECO:0000312" key="12">
    <source>
        <dbReference type="HGNC" id="HGNC:17229"/>
    </source>
</evidence>
<evidence type="ECO:0007744" key="13">
    <source>
        <dbReference type="PDB" id="7UNG"/>
    </source>
</evidence>
<sequence length="551" mass="65730">MPLSTAGILSSSSAASNRSRNKARYRTKAVSSEVDESLFGDIKSPAQGQSDSPIVLLRDKHTLQKTLTALGLDRKPETIQLITRDMVRELIVPTEDPSGESLIISPEEFERIKWASHVLTREELEARDQAFKKEKEATMDAVMTRKKIMKQKEMVWNNNKKLSDLEEVAKERAQNLLQRANKLRMEQEEELKDMSKIILNAKCHAIRDAQILEKQQIQKELDTEEKRLDQMMEVERQKSIQRQEELERKRREERIRGRRQIVEQMEKNQEERSLLAEQREQEKEQMLEYMEQLQEEDLKDMERRQQQKLKMQAEIKRINDENQKQKAELLAQEKLADQMVMEFTKKKMAREAEFEAEQERIRREKEKEIARLRAMQEKAQDYQAEQDALRAKRNQEVADREWRRKEKENARKKMETEAELRKSRLEQVAFKEHALAVQVQRDRDEFERILRAQREQIEKERLEEEKKATGRLQHANELRRQVRENQQKEVQNRIATFEEGRRLKEEAQKRRERIDEIKRKKLEELRATGLPEKYCIEAERKANILPATSVN</sequence>
<name>CFA45_HUMAN</name>